<feature type="chain" id="PRO_0000373191" description="Protein MGF 110-3L">
    <location>
        <begin position="1"/>
        <end position="125"/>
    </location>
</feature>
<feature type="topological domain" description="Cytoplasmic" evidence="2">
    <location>
        <begin position="1"/>
        <end position="6"/>
    </location>
</feature>
<feature type="transmembrane region" description="Helical" evidence="2">
    <location>
        <begin position="7"/>
        <end position="27"/>
    </location>
</feature>
<feature type="topological domain" description="Extracellular" evidence="2">
    <location>
        <begin position="28"/>
        <end position="116"/>
    </location>
</feature>
<feature type="glycosylation site" description="N-linked (GlcNAc...) asparagine; by host" evidence="2">
    <location>
        <position position="64"/>
    </location>
</feature>
<comment type="function">
    <text evidence="1">Plays a role in virus cell tropism, and may be required for efficient virus replication in macrophages.</text>
</comment>
<comment type="subcellular location">
    <subcellularLocation>
        <location evidence="3">Host membrane</location>
        <topology evidence="3">Single-pass membrane protein</topology>
    </subcellularLocation>
</comment>
<comment type="similarity">
    <text evidence="3">Belongs to the asfivirus MGF 110 family.</text>
</comment>
<proteinExistence type="inferred from homology"/>
<evidence type="ECO:0000250" key="1"/>
<evidence type="ECO:0000255" key="2"/>
<evidence type="ECO:0000305" key="3"/>
<sequence>MLVIFLGILGLLANQVFGLPAKNAGHLYSTENPPEEELGFWCTYMESCRFCWDCEHGICKNKVNESMPWIIENSYLTTCAVSRWYDQCMYEEGNAKHYHTMDCSNPVPHNRPHRLGMKIYEREDL</sequence>
<keyword id="KW-0325">Glycoprotein</keyword>
<keyword id="KW-1043">Host membrane</keyword>
<keyword id="KW-0472">Membrane</keyword>
<keyword id="KW-0812">Transmembrane</keyword>
<keyword id="KW-1133">Transmembrane helix</keyword>
<reference key="1">
    <citation type="submission" date="2003-03" db="EMBL/GenBank/DDBJ databases">
        <title>African swine fever virus genomes.</title>
        <authorList>
            <person name="Kutish G.F."/>
            <person name="Rock D.L."/>
        </authorList>
    </citation>
    <scope>NUCLEOTIDE SEQUENCE [LARGE SCALE GENOMIC DNA]</scope>
</reference>
<gene>
    <name type="ordered locus">Ken-010</name>
</gene>
<name>1103L_ASFK5</name>
<organism>
    <name type="scientific">African swine fever virus (isolate Pig/Kenya/KEN-50/1950)</name>
    <name type="common">ASFV</name>
    <dbReference type="NCBI Taxonomy" id="561445"/>
    <lineage>
        <taxon>Viruses</taxon>
        <taxon>Varidnaviria</taxon>
        <taxon>Bamfordvirae</taxon>
        <taxon>Nucleocytoviricota</taxon>
        <taxon>Pokkesviricetes</taxon>
        <taxon>Asfuvirales</taxon>
        <taxon>Asfarviridae</taxon>
        <taxon>Asfivirus</taxon>
        <taxon>African swine fever virus</taxon>
    </lineage>
</organism>
<dbReference type="EMBL" id="AY261360">
    <property type="status" value="NOT_ANNOTATED_CDS"/>
    <property type="molecule type" value="Genomic_DNA"/>
</dbReference>
<dbReference type="Proteomes" id="UP000000861">
    <property type="component" value="Segment"/>
</dbReference>
<dbReference type="GO" id="GO:0033644">
    <property type="term" value="C:host cell membrane"/>
    <property type="evidence" value="ECO:0007669"/>
    <property type="project" value="UniProtKB-SubCell"/>
</dbReference>
<dbReference type="GO" id="GO:0016020">
    <property type="term" value="C:membrane"/>
    <property type="evidence" value="ECO:0007669"/>
    <property type="project" value="UniProtKB-KW"/>
</dbReference>
<dbReference type="InterPro" id="IPR004848">
    <property type="entry name" value="ASFV_fam_110"/>
</dbReference>
<dbReference type="Pfam" id="PF01639">
    <property type="entry name" value="v110"/>
    <property type="match status" value="1"/>
</dbReference>
<accession>P0C9G9</accession>
<protein>
    <recommendedName>
        <fullName>Protein MGF 110-3L</fullName>
    </recommendedName>
</protein>
<organismHost>
    <name type="scientific">Ornithodoros</name>
    <name type="common">relapsing fever ticks</name>
    <dbReference type="NCBI Taxonomy" id="6937"/>
</organismHost>
<organismHost>
    <name type="scientific">Phacochoerus aethiopicus</name>
    <name type="common">Warthog</name>
    <dbReference type="NCBI Taxonomy" id="85517"/>
</organismHost>
<organismHost>
    <name type="scientific">Phacochoerus africanus</name>
    <name type="common">Warthog</name>
    <dbReference type="NCBI Taxonomy" id="41426"/>
</organismHost>
<organismHost>
    <name type="scientific">Potamochoerus larvatus</name>
    <name type="common">Bushpig</name>
    <dbReference type="NCBI Taxonomy" id="273792"/>
</organismHost>
<organismHost>
    <name type="scientific">Sus scrofa</name>
    <name type="common">Pig</name>
    <dbReference type="NCBI Taxonomy" id="9823"/>
</organismHost>